<name>RS15_ACIBT</name>
<comment type="function">
    <text evidence="1">One of the primary rRNA binding proteins, it binds directly to 16S rRNA where it helps nucleate assembly of the platform of the 30S subunit by binding and bridging several RNA helices of the 16S rRNA.</text>
</comment>
<comment type="function">
    <text evidence="1">Forms an intersubunit bridge (bridge B4) with the 23S rRNA of the 50S subunit in the ribosome.</text>
</comment>
<comment type="subunit">
    <text evidence="1">Part of the 30S ribosomal subunit. Forms a bridge to the 50S subunit in the 70S ribosome, contacting the 23S rRNA.</text>
</comment>
<comment type="similarity">
    <text evidence="1">Belongs to the universal ribosomal protein uS15 family.</text>
</comment>
<organism>
    <name type="scientific">Acinetobacter baumannii (strain ATCC 17978 / DSM 105126 / CIP 53.77 / LMG 1025 / NCDC KC755 / 5377)</name>
    <dbReference type="NCBI Taxonomy" id="400667"/>
    <lineage>
        <taxon>Bacteria</taxon>
        <taxon>Pseudomonadati</taxon>
        <taxon>Pseudomonadota</taxon>
        <taxon>Gammaproteobacteria</taxon>
        <taxon>Moraxellales</taxon>
        <taxon>Moraxellaceae</taxon>
        <taxon>Acinetobacter</taxon>
        <taxon>Acinetobacter calcoaceticus/baumannii complex</taxon>
    </lineage>
</organism>
<accession>A3M1M6</accession>
<proteinExistence type="inferred from homology"/>
<evidence type="ECO:0000255" key="1">
    <source>
        <dbReference type="HAMAP-Rule" id="MF_01343"/>
    </source>
</evidence>
<evidence type="ECO:0000305" key="2"/>
<feature type="chain" id="PRO_1000054737" description="Small ribosomal subunit protein uS15">
    <location>
        <begin position="1"/>
        <end position="89"/>
    </location>
</feature>
<keyword id="KW-0687">Ribonucleoprotein</keyword>
<keyword id="KW-0689">Ribosomal protein</keyword>
<keyword id="KW-0694">RNA-binding</keyword>
<keyword id="KW-0699">rRNA-binding</keyword>
<sequence length="89" mass="10125">MALTNADRAEIIAKFARAENDTGSPEVQVALLTAQINDLQGHFKAHKHDHHSRRGLIRMVNQRRKLLDYLNGKDHERYTALIGALGLRR</sequence>
<dbReference type="EMBL" id="CP000521">
    <property type="protein sequence ID" value="ABO10820.1"/>
    <property type="molecule type" value="Genomic_DNA"/>
</dbReference>
<dbReference type="RefSeq" id="WP_001229357.1">
    <property type="nucleotide sequence ID" value="NZ_CP053098.1"/>
</dbReference>
<dbReference type="SMR" id="A3M1M6"/>
<dbReference type="GeneID" id="92892353"/>
<dbReference type="KEGG" id="acb:A1S_0360"/>
<dbReference type="HOGENOM" id="CLU_148518_0_0_6"/>
<dbReference type="GO" id="GO:0022627">
    <property type="term" value="C:cytosolic small ribosomal subunit"/>
    <property type="evidence" value="ECO:0007669"/>
    <property type="project" value="TreeGrafter"/>
</dbReference>
<dbReference type="GO" id="GO:0019843">
    <property type="term" value="F:rRNA binding"/>
    <property type="evidence" value="ECO:0007669"/>
    <property type="project" value="UniProtKB-UniRule"/>
</dbReference>
<dbReference type="GO" id="GO:0003735">
    <property type="term" value="F:structural constituent of ribosome"/>
    <property type="evidence" value="ECO:0007669"/>
    <property type="project" value="InterPro"/>
</dbReference>
<dbReference type="GO" id="GO:0006412">
    <property type="term" value="P:translation"/>
    <property type="evidence" value="ECO:0007669"/>
    <property type="project" value="UniProtKB-UniRule"/>
</dbReference>
<dbReference type="CDD" id="cd00353">
    <property type="entry name" value="Ribosomal_S15p_S13e"/>
    <property type="match status" value="1"/>
</dbReference>
<dbReference type="FunFam" id="1.10.287.10:FF:000002">
    <property type="entry name" value="30S ribosomal protein S15"/>
    <property type="match status" value="1"/>
</dbReference>
<dbReference type="Gene3D" id="6.10.250.3130">
    <property type="match status" value="1"/>
</dbReference>
<dbReference type="Gene3D" id="1.10.287.10">
    <property type="entry name" value="S15/NS1, RNA-binding"/>
    <property type="match status" value="1"/>
</dbReference>
<dbReference type="HAMAP" id="MF_01343_B">
    <property type="entry name" value="Ribosomal_uS15_B"/>
    <property type="match status" value="1"/>
</dbReference>
<dbReference type="InterPro" id="IPR000589">
    <property type="entry name" value="Ribosomal_uS15"/>
</dbReference>
<dbReference type="InterPro" id="IPR005290">
    <property type="entry name" value="Ribosomal_uS15_bac-type"/>
</dbReference>
<dbReference type="InterPro" id="IPR009068">
    <property type="entry name" value="uS15_NS1_RNA-bd_sf"/>
</dbReference>
<dbReference type="NCBIfam" id="TIGR00952">
    <property type="entry name" value="S15_bact"/>
    <property type="match status" value="1"/>
</dbReference>
<dbReference type="PANTHER" id="PTHR23321">
    <property type="entry name" value="RIBOSOMAL PROTEIN S15, BACTERIAL AND ORGANELLAR"/>
    <property type="match status" value="1"/>
</dbReference>
<dbReference type="PANTHER" id="PTHR23321:SF26">
    <property type="entry name" value="SMALL RIBOSOMAL SUBUNIT PROTEIN US15M"/>
    <property type="match status" value="1"/>
</dbReference>
<dbReference type="Pfam" id="PF00312">
    <property type="entry name" value="Ribosomal_S15"/>
    <property type="match status" value="1"/>
</dbReference>
<dbReference type="SMART" id="SM01387">
    <property type="entry name" value="Ribosomal_S15"/>
    <property type="match status" value="1"/>
</dbReference>
<dbReference type="SUPFAM" id="SSF47060">
    <property type="entry name" value="S15/NS1 RNA-binding domain"/>
    <property type="match status" value="1"/>
</dbReference>
<dbReference type="PROSITE" id="PS00362">
    <property type="entry name" value="RIBOSOMAL_S15"/>
    <property type="match status" value="1"/>
</dbReference>
<protein>
    <recommendedName>
        <fullName evidence="1">Small ribosomal subunit protein uS15</fullName>
    </recommendedName>
    <alternativeName>
        <fullName evidence="2">30S ribosomal protein S15</fullName>
    </alternativeName>
</protein>
<reference key="1">
    <citation type="journal article" date="2007" name="Genes Dev.">
        <title>New insights into Acinetobacter baumannii pathogenesis revealed by high-density pyrosequencing and transposon mutagenesis.</title>
        <authorList>
            <person name="Smith M.G."/>
            <person name="Gianoulis T.A."/>
            <person name="Pukatzki S."/>
            <person name="Mekalanos J.J."/>
            <person name="Ornston L.N."/>
            <person name="Gerstein M."/>
            <person name="Snyder M."/>
        </authorList>
    </citation>
    <scope>NUCLEOTIDE SEQUENCE [LARGE SCALE GENOMIC DNA]</scope>
    <source>
        <strain>ATCC 17978 / DSM 105126 / CIP 53.77 / LMG 1025 / NCDC KC755 / 5377</strain>
    </source>
</reference>
<gene>
    <name evidence="1" type="primary">rpsO</name>
    <name type="ordered locus">A1S_0360</name>
</gene>